<evidence type="ECO:0000255" key="1">
    <source>
        <dbReference type="HAMAP-Rule" id="MF_00422"/>
    </source>
</evidence>
<evidence type="ECO:0000256" key="2">
    <source>
        <dbReference type="SAM" id="MobiDB-lite"/>
    </source>
</evidence>
<proteinExistence type="inferred from homology"/>
<gene>
    <name evidence="1" type="primary">secE</name>
    <name type="ordered locus">BQ2027_MB0657</name>
</gene>
<comment type="function">
    <text evidence="1">Essential subunit of the Sec protein translocation channel SecYEG. Clamps together the 2 halves of SecY. May contact the channel plug during translocation.</text>
</comment>
<comment type="subunit">
    <text evidence="1">Component of the Sec protein translocase complex. Heterotrimer consisting of SecY, SecE and SecG subunits. The heterotrimers can form oligomers, although 1 heterotrimer is thought to be able to translocate proteins. Interacts with the ribosome. Interacts with SecDF, and other proteins may be involved. Interacts with SecA.</text>
</comment>
<comment type="subcellular location">
    <subcellularLocation>
        <location evidence="1">Cell membrane</location>
        <topology evidence="1">Single-pass membrane protein</topology>
    </subcellularLocation>
</comment>
<comment type="similarity">
    <text evidence="1">Belongs to the SecE/SEC61-gamma family.</text>
</comment>
<feature type="chain" id="PRO_0000104169" description="Protein translocase subunit SecE">
    <location>
        <begin position="1"/>
        <end position="161"/>
    </location>
</feature>
<feature type="transmembrane region" description="Helical" evidence="1">
    <location>
        <begin position="133"/>
        <end position="153"/>
    </location>
</feature>
<feature type="region of interest" description="Disordered" evidence="2">
    <location>
        <begin position="1"/>
        <end position="80"/>
    </location>
</feature>
<feature type="compositionally biased region" description="Acidic residues" evidence="2">
    <location>
        <begin position="1"/>
        <end position="12"/>
    </location>
</feature>
<sequence>MSDEGDVADEAVADGAENADSRGSGGRTALVTKPVVRPQRPTGKRSRSRAAGADADVDVEEPSTAASEATGVAKDDSTTKAVSKAARAKKASKPKARSVNPIAFVYNYLKQVVAEMRKVIWPNRKQMLTYTSVVLAFLAFMVALVAGADLGLTKLVMLVFG</sequence>
<dbReference type="EMBL" id="LT708304">
    <property type="protein sequence ID" value="SIT99255.1"/>
    <property type="molecule type" value="Genomic_DNA"/>
</dbReference>
<dbReference type="RefSeq" id="NP_854315.1">
    <property type="nucleotide sequence ID" value="NC_002945.3"/>
</dbReference>
<dbReference type="RefSeq" id="WP_003403284.1">
    <property type="nucleotide sequence ID" value="NC_002945.4"/>
</dbReference>
<dbReference type="SMR" id="P0A5Z1"/>
<dbReference type="KEGG" id="mbo:BQ2027_MB0657"/>
<dbReference type="PATRIC" id="fig|233413.5.peg.717"/>
<dbReference type="Proteomes" id="UP000001419">
    <property type="component" value="Chromosome"/>
</dbReference>
<dbReference type="GO" id="GO:0005886">
    <property type="term" value="C:plasma membrane"/>
    <property type="evidence" value="ECO:0007669"/>
    <property type="project" value="UniProtKB-SubCell"/>
</dbReference>
<dbReference type="GO" id="GO:0008320">
    <property type="term" value="F:protein transmembrane transporter activity"/>
    <property type="evidence" value="ECO:0007669"/>
    <property type="project" value="UniProtKB-UniRule"/>
</dbReference>
<dbReference type="GO" id="GO:0065002">
    <property type="term" value="P:intracellular protein transmembrane transport"/>
    <property type="evidence" value="ECO:0007669"/>
    <property type="project" value="UniProtKB-UniRule"/>
</dbReference>
<dbReference type="GO" id="GO:0009306">
    <property type="term" value="P:protein secretion"/>
    <property type="evidence" value="ECO:0007669"/>
    <property type="project" value="UniProtKB-UniRule"/>
</dbReference>
<dbReference type="GO" id="GO:0006605">
    <property type="term" value="P:protein targeting"/>
    <property type="evidence" value="ECO:0007669"/>
    <property type="project" value="UniProtKB-UniRule"/>
</dbReference>
<dbReference type="GO" id="GO:0043952">
    <property type="term" value="P:protein transport by the Sec complex"/>
    <property type="evidence" value="ECO:0007669"/>
    <property type="project" value="UniProtKB-UniRule"/>
</dbReference>
<dbReference type="FunFam" id="1.20.5.1030:FF:000004">
    <property type="entry name" value="Protein translocase subunit SecE"/>
    <property type="match status" value="1"/>
</dbReference>
<dbReference type="Gene3D" id="1.20.5.1030">
    <property type="entry name" value="Preprotein translocase secy subunit"/>
    <property type="match status" value="1"/>
</dbReference>
<dbReference type="HAMAP" id="MF_00422">
    <property type="entry name" value="SecE"/>
    <property type="match status" value="1"/>
</dbReference>
<dbReference type="InterPro" id="IPR005807">
    <property type="entry name" value="SecE_bac"/>
</dbReference>
<dbReference type="InterPro" id="IPR038379">
    <property type="entry name" value="SecE_sf"/>
</dbReference>
<dbReference type="InterPro" id="IPR001901">
    <property type="entry name" value="Translocase_SecE/Sec61-g"/>
</dbReference>
<dbReference type="NCBIfam" id="NF005782">
    <property type="entry name" value="PRK07597.9-1"/>
    <property type="match status" value="1"/>
</dbReference>
<dbReference type="NCBIfam" id="TIGR00964">
    <property type="entry name" value="secE_bact"/>
    <property type="match status" value="1"/>
</dbReference>
<dbReference type="PANTHER" id="PTHR33910">
    <property type="entry name" value="PROTEIN TRANSLOCASE SUBUNIT SECE"/>
    <property type="match status" value="1"/>
</dbReference>
<dbReference type="PANTHER" id="PTHR33910:SF1">
    <property type="entry name" value="PROTEIN TRANSLOCASE SUBUNIT SECE"/>
    <property type="match status" value="1"/>
</dbReference>
<dbReference type="Pfam" id="PF00584">
    <property type="entry name" value="SecE"/>
    <property type="match status" value="1"/>
</dbReference>
<dbReference type="PROSITE" id="PS01067">
    <property type="entry name" value="SECE_SEC61G"/>
    <property type="match status" value="1"/>
</dbReference>
<protein>
    <recommendedName>
        <fullName evidence="1">Protein translocase subunit SecE</fullName>
    </recommendedName>
</protein>
<accession>P0A5Z1</accession>
<accession>A0A1R3XWD5</accession>
<accession>P96929</accession>
<accession>X2BFN4</accession>
<keyword id="KW-1003">Cell membrane</keyword>
<keyword id="KW-0472">Membrane</keyword>
<keyword id="KW-0653">Protein transport</keyword>
<keyword id="KW-1185">Reference proteome</keyword>
<keyword id="KW-0811">Translocation</keyword>
<keyword id="KW-0812">Transmembrane</keyword>
<keyword id="KW-1133">Transmembrane helix</keyword>
<keyword id="KW-0813">Transport</keyword>
<name>SECE_MYCBO</name>
<reference key="1">
    <citation type="journal article" date="2003" name="Proc. Natl. Acad. Sci. U.S.A.">
        <title>The complete genome sequence of Mycobacterium bovis.</title>
        <authorList>
            <person name="Garnier T."/>
            <person name="Eiglmeier K."/>
            <person name="Camus J.-C."/>
            <person name="Medina N."/>
            <person name="Mansoor H."/>
            <person name="Pryor M."/>
            <person name="Duthoy S."/>
            <person name="Grondin S."/>
            <person name="Lacroix C."/>
            <person name="Monsempe C."/>
            <person name="Simon S."/>
            <person name="Harris B."/>
            <person name="Atkin R."/>
            <person name="Doggett J."/>
            <person name="Mayes R."/>
            <person name="Keating L."/>
            <person name="Wheeler P.R."/>
            <person name="Parkhill J."/>
            <person name="Barrell B.G."/>
            <person name="Cole S.T."/>
            <person name="Gordon S.V."/>
            <person name="Hewinson R.G."/>
        </authorList>
    </citation>
    <scope>NUCLEOTIDE SEQUENCE [LARGE SCALE GENOMIC DNA]</scope>
    <source>
        <strain>ATCC BAA-935 / AF2122/97</strain>
    </source>
</reference>
<reference key="2">
    <citation type="journal article" date="2017" name="Genome Announc.">
        <title>Updated reference genome sequence and annotation of Mycobacterium bovis AF2122/97.</title>
        <authorList>
            <person name="Malone K.M."/>
            <person name="Farrell D."/>
            <person name="Stuber T.P."/>
            <person name="Schubert O.T."/>
            <person name="Aebersold R."/>
            <person name="Robbe-Austerman S."/>
            <person name="Gordon S.V."/>
        </authorList>
    </citation>
    <scope>NUCLEOTIDE SEQUENCE [LARGE SCALE GENOMIC DNA]</scope>
    <scope>GENOME REANNOTATION</scope>
    <source>
        <strain>ATCC BAA-935 / AF2122/97</strain>
    </source>
</reference>
<organism>
    <name type="scientific">Mycobacterium bovis (strain ATCC BAA-935 / AF2122/97)</name>
    <dbReference type="NCBI Taxonomy" id="233413"/>
    <lineage>
        <taxon>Bacteria</taxon>
        <taxon>Bacillati</taxon>
        <taxon>Actinomycetota</taxon>
        <taxon>Actinomycetes</taxon>
        <taxon>Mycobacteriales</taxon>
        <taxon>Mycobacteriaceae</taxon>
        <taxon>Mycobacterium</taxon>
        <taxon>Mycobacterium tuberculosis complex</taxon>
    </lineage>
</organism>